<protein>
    <recommendedName>
        <fullName>Membrane-associated transporter protein</fullName>
    </recommendedName>
    <alternativeName>
        <fullName>Melanoma antigen AIM1</fullName>
        <shortName>Protein AIM-1</shortName>
    </alternativeName>
    <alternativeName>
        <fullName>Protein underwhite</fullName>
    </alternativeName>
    <alternativeName>
        <fullName>Solute carrier family 45 member 2</fullName>
    </alternativeName>
</protein>
<proteinExistence type="evidence at protein level"/>
<name>S45A2_MOUSE</name>
<feature type="chain" id="PRO_0000122518" description="Membrane-associated transporter protein">
    <location>
        <begin position="1"/>
        <end position="530"/>
    </location>
</feature>
<feature type="topological domain" description="Cytoplasmic" evidence="1">
    <location>
        <begin position="1"/>
        <end position="45"/>
    </location>
</feature>
<feature type="transmembrane region" description="Helical; Name=1" evidence="1">
    <location>
        <begin position="46"/>
        <end position="66"/>
    </location>
</feature>
<feature type="topological domain" description="Extracellular" evidence="1">
    <location>
        <begin position="67"/>
        <end position="68"/>
    </location>
</feature>
<feature type="transmembrane region" description="Helical; Name=2" evidence="1">
    <location>
        <begin position="69"/>
        <end position="89"/>
    </location>
</feature>
<feature type="topological domain" description="Cytoplasmic" evidence="1">
    <location>
        <begin position="90"/>
        <end position="105"/>
    </location>
</feature>
<feature type="transmembrane region" description="Helical; Name=3" evidence="1">
    <location>
        <begin position="106"/>
        <end position="126"/>
    </location>
</feature>
<feature type="topological domain" description="Extracellular" evidence="1">
    <location>
        <begin position="127"/>
        <end position="138"/>
    </location>
</feature>
<feature type="transmembrane region" description="Helical; Name=4" evidence="1">
    <location>
        <begin position="139"/>
        <end position="159"/>
    </location>
</feature>
<feature type="topological domain" description="Cytoplasmic" evidence="1">
    <location>
        <begin position="160"/>
        <end position="184"/>
    </location>
</feature>
<feature type="transmembrane region" description="Helical; Name=5" evidence="1">
    <location>
        <begin position="185"/>
        <end position="205"/>
    </location>
</feature>
<feature type="topological domain" description="Extracellular" evidence="1">
    <location>
        <begin position="206"/>
        <end position="216"/>
    </location>
</feature>
<feature type="transmembrane region" description="Helical; Name=6" evidence="1">
    <location>
        <begin position="217"/>
        <end position="237"/>
    </location>
</feature>
<feature type="topological domain" description="Cytoplasmic" evidence="1">
    <location>
        <begin position="238"/>
        <end position="318"/>
    </location>
</feature>
<feature type="transmembrane region" description="Helical; Name=7" evidence="1">
    <location>
        <begin position="319"/>
        <end position="339"/>
    </location>
</feature>
<feature type="topological domain" description="Extracellular" evidence="1">
    <location>
        <begin position="340"/>
        <end position="366"/>
    </location>
</feature>
<feature type="transmembrane region" description="Helical; Name=8" evidence="1">
    <location>
        <begin position="367"/>
        <end position="387"/>
    </location>
</feature>
<feature type="topological domain" description="Cytoplasmic" evidence="1">
    <location>
        <begin position="388"/>
        <end position="398"/>
    </location>
</feature>
<feature type="transmembrane region" description="Helical; Name=9" evidence="1">
    <location>
        <begin position="399"/>
        <end position="419"/>
    </location>
</feature>
<feature type="topological domain" description="Extracellular" evidence="1">
    <location>
        <begin position="420"/>
        <end position="425"/>
    </location>
</feature>
<feature type="transmembrane region" description="Helical; Name=10" evidence="1">
    <location>
        <begin position="426"/>
        <end position="446"/>
    </location>
</feature>
<feature type="topological domain" description="Cytoplasmic" evidence="1">
    <location>
        <begin position="447"/>
        <end position="477"/>
    </location>
</feature>
<feature type="transmembrane region" description="Helical; Name=11" evidence="1">
    <location>
        <begin position="478"/>
        <end position="498"/>
    </location>
</feature>
<feature type="topological domain" description="Extracellular" evidence="1">
    <location>
        <begin position="499"/>
        <end position="504"/>
    </location>
</feature>
<feature type="transmembrane region" description="Helical; Name=12" evidence="1">
    <location>
        <begin position="505"/>
        <end position="525"/>
    </location>
</feature>
<feature type="topological domain" description="Cytoplasmic" evidence="1">
    <location>
        <begin position="526"/>
        <end position="530"/>
    </location>
</feature>
<feature type="region of interest" description="Disordered" evidence="2">
    <location>
        <begin position="275"/>
        <end position="299"/>
    </location>
</feature>
<feature type="glycosylation site" description="N-linked (GlcNAc...) asparagine" evidence="1">
    <location>
        <position position="356"/>
    </location>
</feature>
<feature type="sequence variant" description="In UW-dbr." evidence="3">
    <original>D</original>
    <variation>N</variation>
    <location>
        <position position="153"/>
    </location>
</feature>
<feature type="sequence variant" description="In UW-dbr." evidence="3">
    <original>S</original>
    <variation>P</variation>
    <location>
        <position position="435"/>
    </location>
</feature>
<dbReference type="EMBL" id="AF360357">
    <property type="protein sequence ID" value="AAK81713.1"/>
    <property type="molecule type" value="mRNA"/>
</dbReference>
<dbReference type="EMBL" id="AK029155">
    <property type="protein sequence ID" value="BAC26330.1"/>
    <property type="molecule type" value="mRNA"/>
</dbReference>
<dbReference type="CCDS" id="CCDS27382.1"/>
<dbReference type="RefSeq" id="NP_444307.1">
    <property type="nucleotide sequence ID" value="NM_053077.3"/>
</dbReference>
<dbReference type="SMR" id="P58355"/>
<dbReference type="FunCoup" id="P58355">
    <property type="interactions" value="38"/>
</dbReference>
<dbReference type="STRING" id="10090.ENSMUSP00000112408"/>
<dbReference type="TCDB" id="2.A.2.4.14">
    <property type="family name" value="the glycoside-pentoside-hexuronide (gph):cation symporter family"/>
</dbReference>
<dbReference type="GlyCosmos" id="P58355">
    <property type="glycosylation" value="1 site, No reported glycans"/>
</dbReference>
<dbReference type="GlyGen" id="P58355">
    <property type="glycosylation" value="2 sites"/>
</dbReference>
<dbReference type="iPTMnet" id="P58355"/>
<dbReference type="PhosphoSitePlus" id="P58355"/>
<dbReference type="PaxDb" id="10090-ENSMUSP00000022851"/>
<dbReference type="Antibodypedia" id="22757">
    <property type="antibodies" value="117 antibodies from 22 providers"/>
</dbReference>
<dbReference type="DNASU" id="22293"/>
<dbReference type="Ensembl" id="ENSMUST00000117100.4">
    <property type="protein sequence ID" value="ENSMUSP00000112408.3"/>
    <property type="gene ID" value="ENSMUSG00000022243.11"/>
</dbReference>
<dbReference type="GeneID" id="22293"/>
<dbReference type="KEGG" id="mmu:22293"/>
<dbReference type="UCSC" id="uc007vgx.1">
    <property type="organism name" value="mouse"/>
</dbReference>
<dbReference type="AGR" id="MGI:2153040"/>
<dbReference type="CTD" id="51151"/>
<dbReference type="MGI" id="MGI:2153040">
    <property type="gene designation" value="Slc45a2"/>
</dbReference>
<dbReference type="VEuPathDB" id="HostDB:ENSMUSG00000022243"/>
<dbReference type="eggNOG" id="KOG0637">
    <property type="taxonomic scope" value="Eukaryota"/>
</dbReference>
<dbReference type="GeneTree" id="ENSGT00950000182914"/>
<dbReference type="HOGENOM" id="CLU_015081_2_0_1"/>
<dbReference type="InParanoid" id="P58355"/>
<dbReference type="OMA" id="LSMPYAM"/>
<dbReference type="OrthoDB" id="28755at2759"/>
<dbReference type="PhylomeDB" id="P58355"/>
<dbReference type="TreeFam" id="TF325412"/>
<dbReference type="Reactome" id="R-MMU-5662702">
    <property type="pathway name" value="Melanin biosynthesis"/>
</dbReference>
<dbReference type="BioGRID-ORCS" id="22293">
    <property type="hits" value="1 hit in 78 CRISPR screens"/>
</dbReference>
<dbReference type="ChiTaRS" id="Slc45a2">
    <property type="organism name" value="mouse"/>
</dbReference>
<dbReference type="PRO" id="PR:P58355"/>
<dbReference type="Proteomes" id="UP000000589">
    <property type="component" value="Chromosome 15"/>
</dbReference>
<dbReference type="RNAct" id="P58355">
    <property type="molecule type" value="protein"/>
</dbReference>
<dbReference type="Bgee" id="ENSMUSG00000022243">
    <property type="expression patterns" value="Expressed in iris and 29 other cell types or tissues"/>
</dbReference>
<dbReference type="ExpressionAtlas" id="P58355">
    <property type="expression patterns" value="baseline and differential"/>
</dbReference>
<dbReference type="GO" id="GO:0033162">
    <property type="term" value="C:melanosome membrane"/>
    <property type="evidence" value="ECO:0000250"/>
    <property type="project" value="UniProtKB"/>
</dbReference>
<dbReference type="GO" id="GO:0005356">
    <property type="term" value="F:D-glucose:proton symporter activity"/>
    <property type="evidence" value="ECO:0000315"/>
    <property type="project" value="UniProtKB"/>
</dbReference>
<dbReference type="GO" id="GO:0008506">
    <property type="term" value="F:sucrose:proton symporter activity"/>
    <property type="evidence" value="ECO:0000314"/>
    <property type="project" value="MGI"/>
</dbReference>
<dbReference type="GO" id="GO:0048066">
    <property type="term" value="P:developmental pigmentation"/>
    <property type="evidence" value="ECO:0000315"/>
    <property type="project" value="UniProtKB"/>
</dbReference>
<dbReference type="GO" id="GO:0035752">
    <property type="term" value="P:lysosomal lumen pH elevation"/>
    <property type="evidence" value="ECO:0000315"/>
    <property type="project" value="UniProtKB"/>
</dbReference>
<dbReference type="GO" id="GO:0006583">
    <property type="term" value="P:melanin biosynthetic process from tyrosine"/>
    <property type="evidence" value="ECO:0000315"/>
    <property type="project" value="UniProtKB"/>
</dbReference>
<dbReference type="GO" id="GO:0015770">
    <property type="term" value="P:sucrose transport"/>
    <property type="evidence" value="ECO:0000314"/>
    <property type="project" value="MGI"/>
</dbReference>
<dbReference type="GO" id="GO:0007601">
    <property type="term" value="P:visual perception"/>
    <property type="evidence" value="ECO:0007669"/>
    <property type="project" value="UniProtKB-KW"/>
</dbReference>
<dbReference type="CDD" id="cd17313">
    <property type="entry name" value="MFS_SLC45_SUC"/>
    <property type="match status" value="1"/>
</dbReference>
<dbReference type="Gene3D" id="1.20.1250.20">
    <property type="entry name" value="MFS general substrate transporter like domains"/>
    <property type="match status" value="1"/>
</dbReference>
<dbReference type="InterPro" id="IPR011701">
    <property type="entry name" value="MFS"/>
</dbReference>
<dbReference type="InterPro" id="IPR036259">
    <property type="entry name" value="MFS_trans_sf"/>
</dbReference>
<dbReference type="PANTHER" id="PTHR19432:SF34">
    <property type="entry name" value="MEMBRANE-ASSOCIATED TRANSPORTER PROTEIN"/>
    <property type="match status" value="1"/>
</dbReference>
<dbReference type="PANTHER" id="PTHR19432">
    <property type="entry name" value="SUGAR TRANSPORTER"/>
    <property type="match status" value="1"/>
</dbReference>
<dbReference type="Pfam" id="PF07690">
    <property type="entry name" value="MFS_1"/>
    <property type="match status" value="1"/>
</dbReference>
<dbReference type="SUPFAM" id="SSF103473">
    <property type="entry name" value="MFS general substrate transporter"/>
    <property type="match status" value="1"/>
</dbReference>
<organism>
    <name type="scientific">Mus musculus</name>
    <name type="common">Mouse</name>
    <dbReference type="NCBI Taxonomy" id="10090"/>
    <lineage>
        <taxon>Eukaryota</taxon>
        <taxon>Metazoa</taxon>
        <taxon>Chordata</taxon>
        <taxon>Craniata</taxon>
        <taxon>Vertebrata</taxon>
        <taxon>Euteleostomi</taxon>
        <taxon>Mammalia</taxon>
        <taxon>Eutheria</taxon>
        <taxon>Euarchontoglires</taxon>
        <taxon>Glires</taxon>
        <taxon>Rodentia</taxon>
        <taxon>Myomorpha</taxon>
        <taxon>Muroidea</taxon>
        <taxon>Muridae</taxon>
        <taxon>Murinae</taxon>
        <taxon>Mus</taxon>
        <taxon>Mus</taxon>
    </lineage>
</organism>
<gene>
    <name type="primary">Slc45a2</name>
    <name type="synonym">Aim1</name>
    <name type="synonym">Matp</name>
    <name type="synonym">uw</name>
</gene>
<comment type="function">
    <text evidence="4 5 6">Proton-associated glucose and sucrose transporter (PubMed:25164149, PubMed:35469906). May be able to transport also fructose (PubMed:25164149). Expressed at a late melanosome maturation stage where functions as a proton/glucose exporter which increase lumenal pH by decreasing glycolysis (PubMed:32966160, PubMed:35469906). Regulates melanogenesis by maintaining melanosome neutralization that is initially initiated by transient OCA2 and required for a proper function of the tyrosinase TYR (PubMed:32966160, PubMed:35469906).</text>
</comment>
<comment type="catalytic activity">
    <reaction evidence="4">
        <text>sucrose(out) + H(+)(out) = sucrose(in) + H(+)(in)</text>
        <dbReference type="Rhea" id="RHEA:72187"/>
        <dbReference type="ChEBI" id="CHEBI:15378"/>
        <dbReference type="ChEBI" id="CHEBI:17992"/>
    </reaction>
</comment>
<comment type="catalytic activity">
    <reaction evidence="6">
        <text>D-glucose(out) + H(+)(out) = D-glucose(in) + H(+)(in)</text>
        <dbReference type="Rhea" id="RHEA:69556"/>
        <dbReference type="ChEBI" id="CHEBI:4167"/>
        <dbReference type="ChEBI" id="CHEBI:15378"/>
    </reaction>
</comment>
<comment type="biophysicochemical properties">
    <kinetics>
        <KM evidence="4">7.4 mM for sucrose</KM>
    </kinetics>
    <phDependence>
        <text evidence="4">Optimum pH is 5.7.</text>
    </phDependence>
</comment>
<comment type="subunit">
    <text evidence="6">Interacts with TYRP1.</text>
</comment>
<comment type="subcellular location">
    <subcellularLocation>
        <location evidence="5">Melanosome membrane</location>
        <topology evidence="1">Multi-pass membrane protein</topology>
    </subcellularLocation>
</comment>
<comment type="tissue specificity">
    <text evidence="4 6">Mainly expressed in eyeballs and skin melanocytes (PubMed:25164149, PubMed:35469906). Also detected in kidney, colon, gall bladder and pancreas (PubMed:25164149).</text>
</comment>
<comment type="disease">
    <text evidence="3">Defects in Slc45a2 are the cause of the UW-dbr phenotype that results in loss of nearly all pigmentation in the homozygous state.</text>
</comment>
<comment type="disruption phenotype">
    <text evidence="6">Mutant mice have clear white fur with red and transparent eyes without melanin in the retinal pigment epithelium chorioid.</text>
</comment>
<comment type="similarity">
    <text evidence="7">Belongs to the glycoside-pentoside-hexuronide (GPH) cation symporter transporter (TC 2.A.2) family.</text>
</comment>
<reference key="1">
    <citation type="journal article" date="2001" name="Nat. Genet.">
        <title>Mutations in the gene encoding B, a novel transporter protein, reduce melanin content in medaka.</title>
        <authorList>
            <person name="Fukamachi S."/>
            <person name="Shimada A."/>
            <person name="Shima A."/>
        </authorList>
    </citation>
    <scope>NUCLEOTIDE SEQUENCE [MRNA]</scope>
    <source>
        <strain>ddY</strain>
        <tissue>Eye</tissue>
        <tissue>Kidney</tissue>
        <tissue>Uterus</tissue>
    </source>
</reference>
<reference key="2">
    <citation type="journal article" date="2001" name="Am. J. Hum. Genet.">
        <title>Mutations in the human orthologue of the mouse underwhite gene (uw) underlie a new form of oculocutaneous albinism, OCA4.</title>
        <authorList>
            <person name="Newton J.M."/>
            <person name="Cohen-Barak O."/>
            <person name="Hagiwara N."/>
            <person name="Gardner J.M."/>
            <person name="Davisson M.T."/>
            <person name="King R.A."/>
            <person name="Brilliant M.H."/>
        </authorList>
    </citation>
    <scope>NUCLEOTIDE SEQUENCE [MRNA]</scope>
    <scope>VARIANTS UW-DBR ASN-153 AND PRO-435</scope>
    <scope>INVOLVEMENT IN UW-DBR</scope>
</reference>
<reference key="3">
    <citation type="journal article" date="2005" name="Science">
        <title>The transcriptional landscape of the mammalian genome.</title>
        <authorList>
            <person name="Carninci P."/>
            <person name="Kasukawa T."/>
            <person name="Katayama S."/>
            <person name="Gough J."/>
            <person name="Frith M.C."/>
            <person name="Maeda N."/>
            <person name="Oyama R."/>
            <person name="Ravasi T."/>
            <person name="Lenhard B."/>
            <person name="Wells C."/>
            <person name="Kodzius R."/>
            <person name="Shimokawa K."/>
            <person name="Bajic V.B."/>
            <person name="Brenner S.E."/>
            <person name="Batalov S."/>
            <person name="Forrest A.R."/>
            <person name="Zavolan M."/>
            <person name="Davis M.J."/>
            <person name="Wilming L.G."/>
            <person name="Aidinis V."/>
            <person name="Allen J.E."/>
            <person name="Ambesi-Impiombato A."/>
            <person name="Apweiler R."/>
            <person name="Aturaliya R.N."/>
            <person name="Bailey T.L."/>
            <person name="Bansal M."/>
            <person name="Baxter L."/>
            <person name="Beisel K.W."/>
            <person name="Bersano T."/>
            <person name="Bono H."/>
            <person name="Chalk A.M."/>
            <person name="Chiu K.P."/>
            <person name="Choudhary V."/>
            <person name="Christoffels A."/>
            <person name="Clutterbuck D.R."/>
            <person name="Crowe M.L."/>
            <person name="Dalla E."/>
            <person name="Dalrymple B.P."/>
            <person name="de Bono B."/>
            <person name="Della Gatta G."/>
            <person name="di Bernardo D."/>
            <person name="Down T."/>
            <person name="Engstrom P."/>
            <person name="Fagiolini M."/>
            <person name="Faulkner G."/>
            <person name="Fletcher C.F."/>
            <person name="Fukushima T."/>
            <person name="Furuno M."/>
            <person name="Futaki S."/>
            <person name="Gariboldi M."/>
            <person name="Georgii-Hemming P."/>
            <person name="Gingeras T.R."/>
            <person name="Gojobori T."/>
            <person name="Green R.E."/>
            <person name="Gustincich S."/>
            <person name="Harbers M."/>
            <person name="Hayashi Y."/>
            <person name="Hensch T.K."/>
            <person name="Hirokawa N."/>
            <person name="Hill D."/>
            <person name="Huminiecki L."/>
            <person name="Iacono M."/>
            <person name="Ikeo K."/>
            <person name="Iwama A."/>
            <person name="Ishikawa T."/>
            <person name="Jakt M."/>
            <person name="Kanapin A."/>
            <person name="Katoh M."/>
            <person name="Kawasawa Y."/>
            <person name="Kelso J."/>
            <person name="Kitamura H."/>
            <person name="Kitano H."/>
            <person name="Kollias G."/>
            <person name="Krishnan S.P."/>
            <person name="Kruger A."/>
            <person name="Kummerfeld S.K."/>
            <person name="Kurochkin I.V."/>
            <person name="Lareau L.F."/>
            <person name="Lazarevic D."/>
            <person name="Lipovich L."/>
            <person name="Liu J."/>
            <person name="Liuni S."/>
            <person name="McWilliam S."/>
            <person name="Madan Babu M."/>
            <person name="Madera M."/>
            <person name="Marchionni L."/>
            <person name="Matsuda H."/>
            <person name="Matsuzawa S."/>
            <person name="Miki H."/>
            <person name="Mignone F."/>
            <person name="Miyake S."/>
            <person name="Morris K."/>
            <person name="Mottagui-Tabar S."/>
            <person name="Mulder N."/>
            <person name="Nakano N."/>
            <person name="Nakauchi H."/>
            <person name="Ng P."/>
            <person name="Nilsson R."/>
            <person name="Nishiguchi S."/>
            <person name="Nishikawa S."/>
            <person name="Nori F."/>
            <person name="Ohara O."/>
            <person name="Okazaki Y."/>
            <person name="Orlando V."/>
            <person name="Pang K.C."/>
            <person name="Pavan W.J."/>
            <person name="Pavesi G."/>
            <person name="Pesole G."/>
            <person name="Petrovsky N."/>
            <person name="Piazza S."/>
            <person name="Reed J."/>
            <person name="Reid J.F."/>
            <person name="Ring B.Z."/>
            <person name="Ringwald M."/>
            <person name="Rost B."/>
            <person name="Ruan Y."/>
            <person name="Salzberg S.L."/>
            <person name="Sandelin A."/>
            <person name="Schneider C."/>
            <person name="Schoenbach C."/>
            <person name="Sekiguchi K."/>
            <person name="Semple C.A."/>
            <person name="Seno S."/>
            <person name="Sessa L."/>
            <person name="Sheng Y."/>
            <person name="Shibata Y."/>
            <person name="Shimada H."/>
            <person name="Shimada K."/>
            <person name="Silva D."/>
            <person name="Sinclair B."/>
            <person name="Sperling S."/>
            <person name="Stupka E."/>
            <person name="Sugiura K."/>
            <person name="Sultana R."/>
            <person name="Takenaka Y."/>
            <person name="Taki K."/>
            <person name="Tammoja K."/>
            <person name="Tan S.L."/>
            <person name="Tang S."/>
            <person name="Taylor M.S."/>
            <person name="Tegner J."/>
            <person name="Teichmann S.A."/>
            <person name="Ueda H.R."/>
            <person name="van Nimwegen E."/>
            <person name="Verardo R."/>
            <person name="Wei C.L."/>
            <person name="Yagi K."/>
            <person name="Yamanishi H."/>
            <person name="Zabarovsky E."/>
            <person name="Zhu S."/>
            <person name="Zimmer A."/>
            <person name="Hide W."/>
            <person name="Bult C."/>
            <person name="Grimmond S.M."/>
            <person name="Teasdale R.D."/>
            <person name="Liu E.T."/>
            <person name="Brusic V."/>
            <person name="Quackenbush J."/>
            <person name="Wahlestedt C."/>
            <person name="Mattick J.S."/>
            <person name="Hume D.A."/>
            <person name="Kai C."/>
            <person name="Sasaki D."/>
            <person name="Tomaru Y."/>
            <person name="Fukuda S."/>
            <person name="Kanamori-Katayama M."/>
            <person name="Suzuki M."/>
            <person name="Aoki J."/>
            <person name="Arakawa T."/>
            <person name="Iida J."/>
            <person name="Imamura K."/>
            <person name="Itoh M."/>
            <person name="Kato T."/>
            <person name="Kawaji H."/>
            <person name="Kawagashira N."/>
            <person name="Kawashima T."/>
            <person name="Kojima M."/>
            <person name="Kondo S."/>
            <person name="Konno H."/>
            <person name="Nakano K."/>
            <person name="Ninomiya N."/>
            <person name="Nishio T."/>
            <person name="Okada M."/>
            <person name="Plessy C."/>
            <person name="Shibata K."/>
            <person name="Shiraki T."/>
            <person name="Suzuki S."/>
            <person name="Tagami M."/>
            <person name="Waki K."/>
            <person name="Watahiki A."/>
            <person name="Okamura-Oho Y."/>
            <person name="Suzuki H."/>
            <person name="Kawai J."/>
            <person name="Hayashizaki Y."/>
        </authorList>
    </citation>
    <scope>NUCLEOTIDE SEQUENCE [LARGE SCALE MRNA]</scope>
    <source>
        <strain>C57BL/6J</strain>
        <tissue>Skin</tissue>
    </source>
</reference>
<reference key="4">
    <citation type="journal article" date="2014" name="Biochem. J.">
        <title>Proton-associated sucrose transport of mammalian solute carrier family 45: an analysis in Saccharomyces cerevisiae.</title>
        <authorList>
            <person name="Bartoelke R."/>
            <person name="Heinisch J.J."/>
            <person name="Wieczorek H."/>
            <person name="Vitavska O."/>
        </authorList>
    </citation>
    <scope>FUNCTION</scope>
    <scope>TRANSPORTER ACTIVITY</scope>
    <scope>SUBCELLULAR LOCATION</scope>
    <scope>BIOPHYSICOCHEMICAL PROPERTIES</scope>
    <scope>TISSUE SPECIFICITY</scope>
</reference>
<reference key="5">
    <citation type="journal article" date="2020" name="Mol. Biol. Cell">
        <title>SLC45A2 protein stability and regulation of melanosome pH determine melanocyte pigmentation.</title>
        <authorList>
            <person name="Le L."/>
            <person name="Escobar I.E."/>
            <person name="Ho T."/>
            <person name="Lefkovith A.J."/>
            <person name="Latteri E."/>
            <person name="Haltaufderhyde K.D."/>
            <person name="Dennis M.K."/>
            <person name="Plowright L."/>
            <person name="Sviderskaya E.V."/>
            <person name="Bennett D.C."/>
            <person name="Oancea E."/>
            <person name="Marks M.S."/>
        </authorList>
    </citation>
    <scope>FUNCTION</scope>
    <scope>SUBCELLULAR LOCATION</scope>
    <scope>TISSUE SPECIFICITY</scope>
</reference>
<reference key="6">
    <citation type="journal article" date="2022" name="J. Invest. Dermatol.">
        <title>Ablation of H+/glucose Exporter SLC45A2 Enhances Melanosomal Glycolysis to Inhibit Melanin Biosynthesis and Promote Melanoma Metastasis.</title>
        <authorList>
            <person name="Liu Y."/>
            <person name="Chi W."/>
            <person name="Tao L."/>
            <person name="Wang G."/>
            <person name="Deepak R.N.V.K."/>
            <person name="Sheng L."/>
            <person name="Chen T."/>
            <person name="Feng Y."/>
            <person name="Cao X."/>
            <person name="Cheng L."/>
            <person name="Zhao X."/>
            <person name="Liu X."/>
            <person name="Deng H."/>
            <person name="Fan H."/>
            <person name="Jiang P."/>
            <person name="Chen L."/>
        </authorList>
    </citation>
    <scope>FUNCTION</scope>
    <scope>DISRUPTION PHENOTYPE</scope>
    <scope>TRANSPORTER ACTIVITY</scope>
    <scope>INTERACTION WITH TYRP1</scope>
    <scope>TISSUE SPECIFICITY</scope>
</reference>
<accession>P58355</accession>
<keyword id="KW-0015">Albinism</keyword>
<keyword id="KW-0225">Disease variant</keyword>
<keyword id="KW-0325">Glycoprotein</keyword>
<keyword id="KW-0470">Melanin biosynthesis</keyword>
<keyword id="KW-0472">Membrane</keyword>
<keyword id="KW-1185">Reference proteome</keyword>
<keyword id="KW-0716">Sensory transduction</keyword>
<keyword id="KW-0769">Symport</keyword>
<keyword id="KW-0812">Transmembrane</keyword>
<keyword id="KW-1133">Transmembrane helix</keyword>
<keyword id="KW-0813">Transport</keyword>
<keyword id="KW-0844">Vision</keyword>
<sequence>MSGSNGPTDTHTYQSLAEDCPFGSVEQPKRSTGRLVMHSMAMFGREFCYAVEAAYVTPVLLSVGLPKSLYSMVWLLSPILGFLLQPVVGSASDHCRARWGRRRPYILTLAIMMLLGMALYLNGDAVVSALVANPRQKLIWAISITMVGVVLFDFSADFIDGPIKAYLFDVCSHQDKEKGLHYHALFTGFGGALGYILGAIDWVHLDLGRLLGTEFQVMFFFSALVLILCFITHLCSIPEAPLRDAATDPPSQQDPQGSSLSASGMHEYGSIEKVKNGGADTEQPVQEWKNKKPSGQSQRTMSMKSLLRALVNMPSHYRCLCVSHLIGWTAFLSNMLFFTDFMGQIVYHGDPYGAHNSTEFLIYERGVEVGCWGLCINSVFSSVYSYFQKAMVSYIGLKGLYFMGYLLFGLGTGFIGLFPNVYSTLVLCSMFGVMSSTLYTVPFNLIAEYHREEEKEKGQEAPGGPDNQGRGKGVDCAALTCMVQLAQILVGGGLGFLVNMAGSVVVVVITASAVSLIGCCFVALFVRYVD</sequence>
<evidence type="ECO:0000255" key="1"/>
<evidence type="ECO:0000256" key="2">
    <source>
        <dbReference type="SAM" id="MobiDB-lite"/>
    </source>
</evidence>
<evidence type="ECO:0000269" key="3">
    <source>
    </source>
</evidence>
<evidence type="ECO:0000269" key="4">
    <source>
    </source>
</evidence>
<evidence type="ECO:0000269" key="5">
    <source>
    </source>
</evidence>
<evidence type="ECO:0000269" key="6">
    <source>
    </source>
</evidence>
<evidence type="ECO:0000305" key="7"/>